<comment type="function">
    <text evidence="1">The beta subunit is responsible for the synthesis of L-tryptophan from indole and L-serine.</text>
</comment>
<comment type="catalytic activity">
    <reaction evidence="1">
        <text>(1S,2R)-1-C-(indol-3-yl)glycerol 3-phosphate + L-serine = D-glyceraldehyde 3-phosphate + L-tryptophan + H2O</text>
        <dbReference type="Rhea" id="RHEA:10532"/>
        <dbReference type="ChEBI" id="CHEBI:15377"/>
        <dbReference type="ChEBI" id="CHEBI:33384"/>
        <dbReference type="ChEBI" id="CHEBI:57912"/>
        <dbReference type="ChEBI" id="CHEBI:58866"/>
        <dbReference type="ChEBI" id="CHEBI:59776"/>
        <dbReference type="EC" id="4.2.1.20"/>
    </reaction>
</comment>
<comment type="cofactor">
    <cofactor evidence="1">
        <name>pyridoxal 5'-phosphate</name>
        <dbReference type="ChEBI" id="CHEBI:597326"/>
    </cofactor>
</comment>
<comment type="pathway">
    <text evidence="1">Amino-acid biosynthesis; L-tryptophan biosynthesis; L-tryptophan from chorismate: step 5/5.</text>
</comment>
<comment type="subunit">
    <text evidence="1">Tetramer of two alpha and two beta chains.</text>
</comment>
<comment type="similarity">
    <text evidence="1">Belongs to the TrpB family.</text>
</comment>
<organism>
    <name type="scientific">Streptomyces avermitilis (strain ATCC 31267 / DSM 46492 / JCM 5070 / NBRC 14893 / NCIMB 12804 / NRRL 8165 / MA-4680)</name>
    <dbReference type="NCBI Taxonomy" id="227882"/>
    <lineage>
        <taxon>Bacteria</taxon>
        <taxon>Bacillati</taxon>
        <taxon>Actinomycetota</taxon>
        <taxon>Actinomycetes</taxon>
        <taxon>Kitasatosporales</taxon>
        <taxon>Streptomycetaceae</taxon>
        <taxon>Streptomyces</taxon>
    </lineage>
</organism>
<keyword id="KW-0028">Amino-acid biosynthesis</keyword>
<keyword id="KW-0057">Aromatic amino acid biosynthesis</keyword>
<keyword id="KW-0456">Lyase</keyword>
<keyword id="KW-0663">Pyridoxal phosphate</keyword>
<keyword id="KW-1185">Reference proteome</keyword>
<keyword id="KW-0822">Tryptophan biosynthesis</keyword>
<evidence type="ECO:0000255" key="1">
    <source>
        <dbReference type="HAMAP-Rule" id="MF_00133"/>
    </source>
</evidence>
<proteinExistence type="inferred from homology"/>
<gene>
    <name evidence="1" type="primary">trpB</name>
    <name type="ordered locus">SAV_6177</name>
</gene>
<accession>Q82A82</accession>
<protein>
    <recommendedName>
        <fullName evidence="1">Tryptophan synthase beta chain</fullName>
        <ecNumber evidence="1">4.2.1.20</ecNumber>
    </recommendedName>
</protein>
<dbReference type="EC" id="4.2.1.20" evidence="1"/>
<dbReference type="EMBL" id="BA000030">
    <property type="protein sequence ID" value="BAC73888.1"/>
    <property type="molecule type" value="Genomic_DNA"/>
</dbReference>
<dbReference type="RefSeq" id="WP_010987578.1">
    <property type="nucleotide sequence ID" value="NZ_JZJK01000089.1"/>
</dbReference>
<dbReference type="SMR" id="Q82A82"/>
<dbReference type="GeneID" id="41543253"/>
<dbReference type="KEGG" id="sma:SAVERM_6177"/>
<dbReference type="eggNOG" id="COG0133">
    <property type="taxonomic scope" value="Bacteria"/>
</dbReference>
<dbReference type="HOGENOM" id="CLU_016734_3_1_11"/>
<dbReference type="OrthoDB" id="9766131at2"/>
<dbReference type="UniPathway" id="UPA00035">
    <property type="reaction ID" value="UER00044"/>
</dbReference>
<dbReference type="Proteomes" id="UP000000428">
    <property type="component" value="Chromosome"/>
</dbReference>
<dbReference type="GO" id="GO:0005737">
    <property type="term" value="C:cytoplasm"/>
    <property type="evidence" value="ECO:0007669"/>
    <property type="project" value="TreeGrafter"/>
</dbReference>
<dbReference type="GO" id="GO:0004834">
    <property type="term" value="F:tryptophan synthase activity"/>
    <property type="evidence" value="ECO:0007669"/>
    <property type="project" value="UniProtKB-UniRule"/>
</dbReference>
<dbReference type="CDD" id="cd06446">
    <property type="entry name" value="Trp-synth_B"/>
    <property type="match status" value="1"/>
</dbReference>
<dbReference type="FunFam" id="3.40.50.1100:FF:000001">
    <property type="entry name" value="Tryptophan synthase beta chain"/>
    <property type="match status" value="1"/>
</dbReference>
<dbReference type="FunFam" id="3.40.50.1100:FF:000004">
    <property type="entry name" value="Tryptophan synthase beta chain"/>
    <property type="match status" value="1"/>
</dbReference>
<dbReference type="Gene3D" id="3.40.50.1100">
    <property type="match status" value="2"/>
</dbReference>
<dbReference type="HAMAP" id="MF_00133">
    <property type="entry name" value="Trp_synth_beta"/>
    <property type="match status" value="1"/>
</dbReference>
<dbReference type="InterPro" id="IPR006653">
    <property type="entry name" value="Trp_synth_b_CS"/>
</dbReference>
<dbReference type="InterPro" id="IPR006654">
    <property type="entry name" value="Trp_synth_beta"/>
</dbReference>
<dbReference type="InterPro" id="IPR023026">
    <property type="entry name" value="Trp_synth_beta/beta-like"/>
</dbReference>
<dbReference type="InterPro" id="IPR001926">
    <property type="entry name" value="TrpB-like_PALP"/>
</dbReference>
<dbReference type="InterPro" id="IPR036052">
    <property type="entry name" value="TrpB-like_PALP_sf"/>
</dbReference>
<dbReference type="NCBIfam" id="TIGR00263">
    <property type="entry name" value="trpB"/>
    <property type="match status" value="1"/>
</dbReference>
<dbReference type="PANTHER" id="PTHR48077:SF3">
    <property type="entry name" value="TRYPTOPHAN SYNTHASE"/>
    <property type="match status" value="1"/>
</dbReference>
<dbReference type="PANTHER" id="PTHR48077">
    <property type="entry name" value="TRYPTOPHAN SYNTHASE-RELATED"/>
    <property type="match status" value="1"/>
</dbReference>
<dbReference type="Pfam" id="PF00291">
    <property type="entry name" value="PALP"/>
    <property type="match status" value="1"/>
</dbReference>
<dbReference type="PIRSF" id="PIRSF001413">
    <property type="entry name" value="Trp_syn_beta"/>
    <property type="match status" value="1"/>
</dbReference>
<dbReference type="SUPFAM" id="SSF53686">
    <property type="entry name" value="Tryptophan synthase beta subunit-like PLP-dependent enzymes"/>
    <property type="match status" value="1"/>
</dbReference>
<dbReference type="PROSITE" id="PS00168">
    <property type="entry name" value="TRP_SYNTHASE_BETA"/>
    <property type="match status" value="1"/>
</dbReference>
<reference key="1">
    <citation type="journal article" date="2001" name="Proc. Natl. Acad. Sci. U.S.A.">
        <title>Genome sequence of an industrial microorganism Streptomyces avermitilis: deducing the ability of producing secondary metabolites.</title>
        <authorList>
            <person name="Omura S."/>
            <person name="Ikeda H."/>
            <person name="Ishikawa J."/>
            <person name="Hanamoto A."/>
            <person name="Takahashi C."/>
            <person name="Shinose M."/>
            <person name="Takahashi Y."/>
            <person name="Horikawa H."/>
            <person name="Nakazawa H."/>
            <person name="Osonoe T."/>
            <person name="Kikuchi H."/>
            <person name="Shiba T."/>
            <person name="Sakaki Y."/>
            <person name="Hattori M."/>
        </authorList>
    </citation>
    <scope>NUCLEOTIDE SEQUENCE [LARGE SCALE GENOMIC DNA]</scope>
    <source>
        <strain>ATCC 31267 / DSM 46492 / JCM 5070 / NBRC 14893 / NCIMB 12804 / NRRL 8165 / MA-4680</strain>
    </source>
</reference>
<reference key="2">
    <citation type="journal article" date="2003" name="Nat. Biotechnol.">
        <title>Complete genome sequence and comparative analysis of the industrial microorganism Streptomyces avermitilis.</title>
        <authorList>
            <person name="Ikeda H."/>
            <person name="Ishikawa J."/>
            <person name="Hanamoto A."/>
            <person name="Shinose M."/>
            <person name="Kikuchi H."/>
            <person name="Shiba T."/>
            <person name="Sakaki Y."/>
            <person name="Hattori M."/>
            <person name="Omura S."/>
        </authorList>
    </citation>
    <scope>NUCLEOTIDE SEQUENCE [LARGE SCALE GENOMIC DNA]</scope>
    <source>
        <strain>ATCC 31267 / DSM 46492 / JCM 5070 / NBRC 14893 / NCIMB 12804 / NRRL 8165 / MA-4680</strain>
    </source>
</reference>
<sequence>MSSEFFIPDPEGQVPTAEGYFGAFGGKFIPEALVAAVDEVAVEYDKAKADPEFARELDDLLVHYTGRPSALTEVSRFAEHAGGARVFLKREDLNHTGSHKINNVLGQALLTRRMGKTRVIAETGAGQHGVATATACALFGLDCTIYMGEIDTQRQALNVARMRMLGAEVIAVKSGSRTLKDAINEAFRDWVANVDRTHYLFGTVAGPHPFPAMVRDFHRVIGVEARRQILERAGRLPDAAVACVGGGSNAIGLFHAFIPDTGVRLIGCEPAGHGLETGEHAATLTAGEPGILHGSRSYVLQDDEGQITEPYSISAGLDYPGIGPEHAYLKDSGRGEYRAVTDDAAMQALRLLSRTEGIIPAIESAHALAGALEIGKELGKDGLILVNLSGRGDKDMDTAARYFGLYDTDASVAADADSDIAEIEGDAK</sequence>
<name>TRPB_STRAW</name>
<feature type="chain" id="PRO_0000099005" description="Tryptophan synthase beta chain">
    <location>
        <begin position="1"/>
        <end position="428"/>
    </location>
</feature>
<feature type="modified residue" description="N6-(pyridoxal phosphate)lysine" evidence="1">
    <location>
        <position position="100"/>
    </location>
</feature>